<evidence type="ECO:0000255" key="1">
    <source>
        <dbReference type="HAMAP-Rule" id="MF_00195"/>
    </source>
</evidence>
<evidence type="ECO:0000256" key="2">
    <source>
        <dbReference type="SAM" id="MobiDB-lite"/>
    </source>
</evidence>
<sequence length="472" mass="52761">MKPVIALVGRPNVGKSTLFNRMTRSRDAIVANLPGLTRDRKYGEGELEGKHYIVVDTGGITGEEQGIDAAMAGQSFTAMNEADVVLFVVDAQAGVTPADEMIAKELRVRGKPTILVVNKIDGMQPEVAAADFFAMGFQEYMYTAAAHNRGVRSLLEKALEPFPEQEPLEGEDDSGIRIGIIGRPNVGKSTLVNRLLGEDRVVVFDQPGTTRDSVYIPYERLGERYTLIDTAGVRRRKNVSEAVEKFSIVKTLQAIKDAHVVVLVLDAREGIVDQDLHLLGFAIEAGRALVLAINKWDGMSQDDKDEVRREIDRRMGFVEYAQIHFISALHGTGVGHLYESVHECFDSAMAKWSTNQLTTLLEDAVSQHQPPMVNGRRIKLRYAHQGGSNPPLIIVHGNQTDALPNSYKRYLENTFRKVLKVVGTPIRFEFRSGENPFAGKKNKLSPRQQKKKERLMKHVKKLKHKQKRKKSR</sequence>
<dbReference type="EMBL" id="CP000155">
    <property type="protein sequence ID" value="ABC31156.1"/>
    <property type="molecule type" value="Genomic_DNA"/>
</dbReference>
<dbReference type="RefSeq" id="WP_011398223.1">
    <property type="nucleotide sequence ID" value="NC_007645.1"/>
</dbReference>
<dbReference type="SMR" id="Q2SDW8"/>
<dbReference type="STRING" id="349521.HCH_04452"/>
<dbReference type="KEGG" id="hch:HCH_04452"/>
<dbReference type="eggNOG" id="COG1160">
    <property type="taxonomic scope" value="Bacteria"/>
</dbReference>
<dbReference type="HOGENOM" id="CLU_016077_6_2_6"/>
<dbReference type="OrthoDB" id="9805918at2"/>
<dbReference type="Proteomes" id="UP000000238">
    <property type="component" value="Chromosome"/>
</dbReference>
<dbReference type="GO" id="GO:0005525">
    <property type="term" value="F:GTP binding"/>
    <property type="evidence" value="ECO:0007669"/>
    <property type="project" value="UniProtKB-UniRule"/>
</dbReference>
<dbReference type="GO" id="GO:0043022">
    <property type="term" value="F:ribosome binding"/>
    <property type="evidence" value="ECO:0007669"/>
    <property type="project" value="TreeGrafter"/>
</dbReference>
<dbReference type="GO" id="GO:0042254">
    <property type="term" value="P:ribosome biogenesis"/>
    <property type="evidence" value="ECO:0007669"/>
    <property type="project" value="UniProtKB-KW"/>
</dbReference>
<dbReference type="CDD" id="cd01894">
    <property type="entry name" value="EngA1"/>
    <property type="match status" value="1"/>
</dbReference>
<dbReference type="CDD" id="cd01895">
    <property type="entry name" value="EngA2"/>
    <property type="match status" value="1"/>
</dbReference>
<dbReference type="FunFam" id="3.30.300.20:FF:000004">
    <property type="entry name" value="GTPase Der"/>
    <property type="match status" value="1"/>
</dbReference>
<dbReference type="FunFam" id="3.40.50.300:FF:000040">
    <property type="entry name" value="GTPase Der"/>
    <property type="match status" value="1"/>
</dbReference>
<dbReference type="FunFam" id="3.40.50.300:FF:000057">
    <property type="entry name" value="GTPase Der"/>
    <property type="match status" value="1"/>
</dbReference>
<dbReference type="Gene3D" id="3.30.300.20">
    <property type="match status" value="1"/>
</dbReference>
<dbReference type="Gene3D" id="3.40.50.300">
    <property type="entry name" value="P-loop containing nucleotide triphosphate hydrolases"/>
    <property type="match status" value="2"/>
</dbReference>
<dbReference type="HAMAP" id="MF_00195">
    <property type="entry name" value="GTPase_Der"/>
    <property type="match status" value="1"/>
</dbReference>
<dbReference type="InterPro" id="IPR031166">
    <property type="entry name" value="G_ENGA"/>
</dbReference>
<dbReference type="InterPro" id="IPR006073">
    <property type="entry name" value="GTP-bd"/>
</dbReference>
<dbReference type="InterPro" id="IPR016484">
    <property type="entry name" value="GTPase_Der"/>
</dbReference>
<dbReference type="InterPro" id="IPR032859">
    <property type="entry name" value="KH_dom-like"/>
</dbReference>
<dbReference type="InterPro" id="IPR015946">
    <property type="entry name" value="KH_dom-like_a/b"/>
</dbReference>
<dbReference type="InterPro" id="IPR027417">
    <property type="entry name" value="P-loop_NTPase"/>
</dbReference>
<dbReference type="InterPro" id="IPR005225">
    <property type="entry name" value="Small_GTP-bd"/>
</dbReference>
<dbReference type="NCBIfam" id="TIGR03594">
    <property type="entry name" value="GTPase_EngA"/>
    <property type="match status" value="1"/>
</dbReference>
<dbReference type="NCBIfam" id="TIGR00231">
    <property type="entry name" value="small_GTP"/>
    <property type="match status" value="2"/>
</dbReference>
<dbReference type="PANTHER" id="PTHR43834">
    <property type="entry name" value="GTPASE DER"/>
    <property type="match status" value="1"/>
</dbReference>
<dbReference type="PANTHER" id="PTHR43834:SF6">
    <property type="entry name" value="GTPASE DER"/>
    <property type="match status" value="1"/>
</dbReference>
<dbReference type="Pfam" id="PF14714">
    <property type="entry name" value="KH_dom-like"/>
    <property type="match status" value="1"/>
</dbReference>
<dbReference type="Pfam" id="PF01926">
    <property type="entry name" value="MMR_HSR1"/>
    <property type="match status" value="2"/>
</dbReference>
<dbReference type="PIRSF" id="PIRSF006485">
    <property type="entry name" value="GTP-binding_EngA"/>
    <property type="match status" value="1"/>
</dbReference>
<dbReference type="PRINTS" id="PR00326">
    <property type="entry name" value="GTP1OBG"/>
</dbReference>
<dbReference type="SUPFAM" id="SSF52540">
    <property type="entry name" value="P-loop containing nucleoside triphosphate hydrolases"/>
    <property type="match status" value="2"/>
</dbReference>
<dbReference type="PROSITE" id="PS51712">
    <property type="entry name" value="G_ENGA"/>
    <property type="match status" value="2"/>
</dbReference>
<gene>
    <name evidence="1" type="primary">der</name>
    <name type="synonym">engA</name>
    <name type="ordered locus">HCH_04452</name>
</gene>
<name>DER_HAHCH</name>
<organism>
    <name type="scientific">Hahella chejuensis (strain KCTC 2396)</name>
    <dbReference type="NCBI Taxonomy" id="349521"/>
    <lineage>
        <taxon>Bacteria</taxon>
        <taxon>Pseudomonadati</taxon>
        <taxon>Pseudomonadota</taxon>
        <taxon>Gammaproteobacteria</taxon>
        <taxon>Oceanospirillales</taxon>
        <taxon>Hahellaceae</taxon>
        <taxon>Hahella</taxon>
    </lineage>
</organism>
<protein>
    <recommendedName>
        <fullName evidence="1">GTPase Der</fullName>
    </recommendedName>
    <alternativeName>
        <fullName evidence="1">GTP-binding protein EngA</fullName>
    </alternativeName>
</protein>
<proteinExistence type="inferred from homology"/>
<reference key="1">
    <citation type="journal article" date="2005" name="Nucleic Acids Res.">
        <title>Genomic blueprint of Hahella chejuensis, a marine microbe producing an algicidal agent.</title>
        <authorList>
            <person name="Jeong H."/>
            <person name="Yim J.H."/>
            <person name="Lee C."/>
            <person name="Choi S.-H."/>
            <person name="Park Y.K."/>
            <person name="Yoon S.H."/>
            <person name="Hur C.-G."/>
            <person name="Kang H.-Y."/>
            <person name="Kim D."/>
            <person name="Lee H.H."/>
            <person name="Park K.H."/>
            <person name="Park S.-H."/>
            <person name="Park H.-S."/>
            <person name="Lee H.K."/>
            <person name="Oh T.K."/>
            <person name="Kim J.F."/>
        </authorList>
    </citation>
    <scope>NUCLEOTIDE SEQUENCE [LARGE SCALE GENOMIC DNA]</scope>
    <source>
        <strain>KCTC 2396</strain>
    </source>
</reference>
<accession>Q2SDW8</accession>
<comment type="function">
    <text evidence="1">GTPase that plays an essential role in the late steps of ribosome biogenesis.</text>
</comment>
<comment type="subunit">
    <text evidence="1">Associates with the 50S ribosomal subunit.</text>
</comment>
<comment type="similarity">
    <text evidence="1">Belongs to the TRAFAC class TrmE-Era-EngA-EngB-Septin-like GTPase superfamily. EngA (Der) GTPase family.</text>
</comment>
<keyword id="KW-0342">GTP-binding</keyword>
<keyword id="KW-0547">Nucleotide-binding</keyword>
<keyword id="KW-1185">Reference proteome</keyword>
<keyword id="KW-0677">Repeat</keyword>
<keyword id="KW-0690">Ribosome biogenesis</keyword>
<feature type="chain" id="PRO_1000011634" description="GTPase Der">
    <location>
        <begin position="1"/>
        <end position="472"/>
    </location>
</feature>
<feature type="domain" description="EngA-type G 1">
    <location>
        <begin position="3"/>
        <end position="166"/>
    </location>
</feature>
<feature type="domain" description="EngA-type G 2">
    <location>
        <begin position="176"/>
        <end position="349"/>
    </location>
</feature>
<feature type="domain" description="KH-like" evidence="1">
    <location>
        <begin position="350"/>
        <end position="434"/>
    </location>
</feature>
<feature type="region of interest" description="Disordered" evidence="2">
    <location>
        <begin position="433"/>
        <end position="472"/>
    </location>
</feature>
<feature type="compositionally biased region" description="Basic residues" evidence="2">
    <location>
        <begin position="440"/>
        <end position="472"/>
    </location>
</feature>
<feature type="binding site" evidence="1">
    <location>
        <begin position="9"/>
        <end position="16"/>
    </location>
    <ligand>
        <name>GTP</name>
        <dbReference type="ChEBI" id="CHEBI:37565"/>
        <label>1</label>
    </ligand>
</feature>
<feature type="binding site" evidence="1">
    <location>
        <begin position="56"/>
        <end position="60"/>
    </location>
    <ligand>
        <name>GTP</name>
        <dbReference type="ChEBI" id="CHEBI:37565"/>
        <label>1</label>
    </ligand>
</feature>
<feature type="binding site" evidence="1">
    <location>
        <begin position="118"/>
        <end position="121"/>
    </location>
    <ligand>
        <name>GTP</name>
        <dbReference type="ChEBI" id="CHEBI:37565"/>
        <label>1</label>
    </ligand>
</feature>
<feature type="binding site" evidence="1">
    <location>
        <begin position="182"/>
        <end position="189"/>
    </location>
    <ligand>
        <name>GTP</name>
        <dbReference type="ChEBI" id="CHEBI:37565"/>
        <label>2</label>
    </ligand>
</feature>
<feature type="binding site" evidence="1">
    <location>
        <begin position="229"/>
        <end position="233"/>
    </location>
    <ligand>
        <name>GTP</name>
        <dbReference type="ChEBI" id="CHEBI:37565"/>
        <label>2</label>
    </ligand>
</feature>
<feature type="binding site" evidence="1">
    <location>
        <begin position="294"/>
        <end position="297"/>
    </location>
    <ligand>
        <name>GTP</name>
        <dbReference type="ChEBI" id="CHEBI:37565"/>
        <label>2</label>
    </ligand>
</feature>